<protein>
    <recommendedName>
        <fullName>S-(hydroxymethyl)glutathione dehydrogenase</fullName>
        <ecNumber>1.1.1.284</ecNumber>
    </recommendedName>
    <alternativeName>
        <fullName>Alcohol dehydrogenase class-3</fullName>
        <ecNumber>1.1.1.1</ecNumber>
    </alternativeName>
    <alternativeName>
        <fullName>Alcohol dehydrogenase class-III</fullName>
    </alternativeName>
    <alternativeName>
        <fullName>Glutathione-dependent formaldehyde dehydrogenase</fullName>
        <shortName>FALDH</shortName>
        <shortName>FDH</shortName>
        <shortName>GSH-FDH</shortName>
        <ecNumber>1.1.1.-</ecNumber>
    </alternativeName>
</protein>
<proteinExistence type="inferred from homology"/>
<gene>
    <name type="primary">frmA</name>
    <name type="synonym">adhC</name>
    <name type="ordered locus">HI_0185</name>
</gene>
<keyword id="KW-0963">Cytoplasm</keyword>
<keyword id="KW-0479">Metal-binding</keyword>
<keyword id="KW-0520">NAD</keyword>
<keyword id="KW-0560">Oxidoreductase</keyword>
<keyword id="KW-1185">Reference proteome</keyword>
<keyword id="KW-0862">Zinc</keyword>
<evidence type="ECO:0000250" key="1">
    <source>
        <dbReference type="UniProtKB" id="P11766"/>
    </source>
</evidence>
<evidence type="ECO:0000250" key="2">
    <source>
        <dbReference type="UniProtKB" id="P25437"/>
    </source>
</evidence>
<evidence type="ECO:0000305" key="3"/>
<organism>
    <name type="scientific">Haemophilus influenzae (strain ATCC 51907 / DSM 11121 / KW20 / Rd)</name>
    <dbReference type="NCBI Taxonomy" id="71421"/>
    <lineage>
        <taxon>Bacteria</taxon>
        <taxon>Pseudomonadati</taxon>
        <taxon>Pseudomonadota</taxon>
        <taxon>Gammaproteobacteria</taxon>
        <taxon>Pasteurellales</taxon>
        <taxon>Pasteurellaceae</taxon>
        <taxon>Haemophilus</taxon>
    </lineage>
</organism>
<reference key="1">
    <citation type="journal article" date="1995" name="Science">
        <title>Whole-genome random sequencing and assembly of Haemophilus influenzae Rd.</title>
        <authorList>
            <person name="Fleischmann R.D."/>
            <person name="Adams M.D."/>
            <person name="White O."/>
            <person name="Clayton R.A."/>
            <person name="Kirkness E.F."/>
            <person name="Kerlavage A.R."/>
            <person name="Bult C.J."/>
            <person name="Tomb J.-F."/>
            <person name="Dougherty B.A."/>
            <person name="Merrick J.M."/>
            <person name="McKenney K."/>
            <person name="Sutton G.G."/>
            <person name="FitzHugh W."/>
            <person name="Fields C.A."/>
            <person name="Gocayne J.D."/>
            <person name="Scott J.D."/>
            <person name="Shirley R."/>
            <person name="Liu L.-I."/>
            <person name="Glodek A."/>
            <person name="Kelley J.M."/>
            <person name="Weidman J.F."/>
            <person name="Phillips C.A."/>
            <person name="Spriggs T."/>
            <person name="Hedblom E."/>
            <person name="Cotton M.D."/>
            <person name="Utterback T.R."/>
            <person name="Hanna M.C."/>
            <person name="Nguyen D.T."/>
            <person name="Saudek D.M."/>
            <person name="Brandon R.C."/>
            <person name="Fine L.D."/>
            <person name="Fritchman J.L."/>
            <person name="Fuhrmann J.L."/>
            <person name="Geoghagen N.S.M."/>
            <person name="Gnehm C.L."/>
            <person name="McDonald L.A."/>
            <person name="Small K.V."/>
            <person name="Fraser C.M."/>
            <person name="Smith H.O."/>
            <person name="Venter J.C."/>
        </authorList>
    </citation>
    <scope>NUCLEOTIDE SEQUENCE [LARGE SCALE GENOMIC DNA]</scope>
    <source>
        <strain>ATCC 51907 / DSM 11121 / KW20 / Rd</strain>
    </source>
</reference>
<sequence length="378" mass="40651">MEIKQINSTIKSRAAVAFAPNQPLQIVEIDVEMPRKGEVLIRNTHTGVCHTDAFTLSGSDPEGVFPVVLGHEGAGVVVAVGEGVLSVKPGDHVIPLYTAECGECEFCRSGKTNLCVSVRDTQGKGLMPDCTTRFSYQGQPIYHYMGCSTFSEYSVVAEVSLAKINPEANHEQVCLLGCGVTTGIGAVHNTAKVQEGDSVAVFGLGAIGLAVVQGARQAKAGRIIAIDTNPAKFELAKQFGATDCLNPNDYDKPIKDVLLDINKWGIDHTFECIGNVNVMRQALESAHRGWGQSIIIGVAGAGQEISTRPFQLVTGRVWKGSAFGGVKGRSELPQMVEDSMKGDIQLEPFVTHTMPLDKINEAFELMHEGKSIRTVIHY</sequence>
<name>FRMA_HAEIN</name>
<comment type="function">
    <text evidence="2">Has high formaldehyde dehydrogenase activity in the presence of glutathione and catalyzes the oxidation of normal alcohols in a reaction that is not GSH-dependent. In addition, hemithiolacetals other than those formed from GSH, including omega-thiol fatty acids, also are substrates. Also acts as a S-nitroso-glutathione reductase by catalyzing the NADH-dependent reduction of S-nitrosoglutathione.</text>
</comment>
<comment type="catalytic activity">
    <reaction evidence="2">
        <text>S-(hydroxymethyl)glutathione + NADP(+) = S-formylglutathione + NADPH + H(+)</text>
        <dbReference type="Rhea" id="RHEA:19981"/>
        <dbReference type="ChEBI" id="CHEBI:15378"/>
        <dbReference type="ChEBI" id="CHEBI:57688"/>
        <dbReference type="ChEBI" id="CHEBI:57783"/>
        <dbReference type="ChEBI" id="CHEBI:58349"/>
        <dbReference type="ChEBI" id="CHEBI:58758"/>
        <dbReference type="EC" id="1.1.1.284"/>
    </reaction>
</comment>
<comment type="catalytic activity">
    <reaction evidence="2">
        <text>S-(hydroxymethyl)glutathione + NAD(+) = S-formylglutathione + NADH + H(+)</text>
        <dbReference type="Rhea" id="RHEA:19985"/>
        <dbReference type="ChEBI" id="CHEBI:15378"/>
        <dbReference type="ChEBI" id="CHEBI:57540"/>
        <dbReference type="ChEBI" id="CHEBI:57688"/>
        <dbReference type="ChEBI" id="CHEBI:57945"/>
        <dbReference type="ChEBI" id="CHEBI:58758"/>
        <dbReference type="EC" id="1.1.1.284"/>
    </reaction>
</comment>
<comment type="catalytic activity">
    <reaction evidence="2">
        <text>a primary alcohol + NAD(+) = an aldehyde + NADH + H(+)</text>
        <dbReference type="Rhea" id="RHEA:10736"/>
        <dbReference type="ChEBI" id="CHEBI:15378"/>
        <dbReference type="ChEBI" id="CHEBI:15734"/>
        <dbReference type="ChEBI" id="CHEBI:17478"/>
        <dbReference type="ChEBI" id="CHEBI:57540"/>
        <dbReference type="ChEBI" id="CHEBI:57945"/>
        <dbReference type="EC" id="1.1.1.1"/>
    </reaction>
</comment>
<comment type="catalytic activity">
    <reaction evidence="2">
        <text>a secondary alcohol + NAD(+) = a ketone + NADH + H(+)</text>
        <dbReference type="Rhea" id="RHEA:10740"/>
        <dbReference type="ChEBI" id="CHEBI:15378"/>
        <dbReference type="ChEBI" id="CHEBI:17087"/>
        <dbReference type="ChEBI" id="CHEBI:35681"/>
        <dbReference type="ChEBI" id="CHEBI:57540"/>
        <dbReference type="ChEBI" id="CHEBI:57945"/>
        <dbReference type="EC" id="1.1.1.1"/>
    </reaction>
</comment>
<comment type="catalytic activity">
    <reaction evidence="2">
        <text>S-nitrosoglutathione + NADH + H(+) = S-(hydroxysulfenamide)glutathione + NAD(+)</text>
        <dbReference type="Rhea" id="RHEA:78371"/>
        <dbReference type="ChEBI" id="CHEBI:15378"/>
        <dbReference type="ChEBI" id="CHEBI:57540"/>
        <dbReference type="ChEBI" id="CHEBI:57945"/>
        <dbReference type="ChEBI" id="CHEBI:145544"/>
        <dbReference type="ChEBI" id="CHEBI:229723"/>
    </reaction>
    <physiologicalReaction direction="left-to-right" evidence="2">
        <dbReference type="Rhea" id="RHEA:78372"/>
    </physiologicalReaction>
</comment>
<comment type="cofactor">
    <cofactor evidence="1">
        <name>Zn(2+)</name>
        <dbReference type="ChEBI" id="CHEBI:29105"/>
    </cofactor>
    <text evidence="1">Binds 2 Zn(2+) ions per subunit.</text>
</comment>
<comment type="subunit">
    <text evidence="2">Homodimer.</text>
</comment>
<comment type="subcellular location">
    <subcellularLocation>
        <location evidence="2">Cytoplasm</location>
    </subcellularLocation>
</comment>
<comment type="similarity">
    <text evidence="3">Belongs to the zinc-containing alcohol dehydrogenase family. Class-III subfamily.</text>
</comment>
<dbReference type="EC" id="1.1.1.284"/>
<dbReference type="EC" id="1.1.1.1"/>
<dbReference type="EC" id="1.1.1.-"/>
<dbReference type="EMBL" id="L42023">
    <property type="protein sequence ID" value="AAC21854.1"/>
    <property type="molecule type" value="Genomic_DNA"/>
</dbReference>
<dbReference type="PIR" id="H64052">
    <property type="entry name" value="H64052"/>
</dbReference>
<dbReference type="RefSeq" id="NP_438353.1">
    <property type="nucleotide sequence ID" value="NC_000907.1"/>
</dbReference>
<dbReference type="SMR" id="P44557"/>
<dbReference type="STRING" id="71421.HI_0185"/>
<dbReference type="EnsemblBacteria" id="AAC21854">
    <property type="protein sequence ID" value="AAC21854"/>
    <property type="gene ID" value="HI_0185"/>
</dbReference>
<dbReference type="KEGG" id="hin:HI_0185"/>
<dbReference type="PATRIC" id="fig|71421.8.peg.189"/>
<dbReference type="eggNOG" id="COG1062">
    <property type="taxonomic scope" value="Bacteria"/>
</dbReference>
<dbReference type="HOGENOM" id="CLU_026673_14_0_6"/>
<dbReference type="OrthoDB" id="9770544at2"/>
<dbReference type="PhylomeDB" id="P44557"/>
<dbReference type="BioCyc" id="HINF71421:G1GJ1-195-MONOMER"/>
<dbReference type="Proteomes" id="UP000000579">
    <property type="component" value="Chromosome"/>
</dbReference>
<dbReference type="GO" id="GO:0005829">
    <property type="term" value="C:cytosol"/>
    <property type="evidence" value="ECO:0000318"/>
    <property type="project" value="GO_Central"/>
</dbReference>
<dbReference type="GO" id="GO:0004022">
    <property type="term" value="F:alcohol dehydrogenase (NAD+) activity"/>
    <property type="evidence" value="ECO:0000318"/>
    <property type="project" value="GO_Central"/>
</dbReference>
<dbReference type="GO" id="GO:0106322">
    <property type="term" value="F:S-(hydroxymethyl)glutathione dehydrogenase (NAD+) activity"/>
    <property type="evidence" value="ECO:0007669"/>
    <property type="project" value="RHEA"/>
</dbReference>
<dbReference type="GO" id="GO:0106321">
    <property type="term" value="F:S-(hydroxymethyl)glutathione dehydrogenase (NADP+) activity"/>
    <property type="evidence" value="ECO:0007669"/>
    <property type="project" value="RHEA"/>
</dbReference>
<dbReference type="GO" id="GO:0051903">
    <property type="term" value="F:S-(hydroxymethyl)glutathione dehydrogenase [NAD(P)+] activity"/>
    <property type="evidence" value="ECO:0000318"/>
    <property type="project" value="GO_Central"/>
</dbReference>
<dbReference type="GO" id="GO:0080007">
    <property type="term" value="F:S-nitrosoglutathione reductase (NADH) activity"/>
    <property type="evidence" value="ECO:0007669"/>
    <property type="project" value="RHEA"/>
</dbReference>
<dbReference type="GO" id="GO:0008270">
    <property type="term" value="F:zinc ion binding"/>
    <property type="evidence" value="ECO:0000318"/>
    <property type="project" value="GO_Central"/>
</dbReference>
<dbReference type="GO" id="GO:0046294">
    <property type="term" value="P:formaldehyde catabolic process"/>
    <property type="evidence" value="ECO:0000318"/>
    <property type="project" value="GO_Central"/>
</dbReference>
<dbReference type="CDD" id="cd08300">
    <property type="entry name" value="alcohol_DH_class_III"/>
    <property type="match status" value="1"/>
</dbReference>
<dbReference type="FunFam" id="3.40.50.720:FF:000003">
    <property type="entry name" value="S-(hydroxymethyl)glutathione dehydrogenase"/>
    <property type="match status" value="1"/>
</dbReference>
<dbReference type="FunFam" id="3.90.180.10:FF:000001">
    <property type="entry name" value="S-(hydroxymethyl)glutathione dehydrogenase"/>
    <property type="match status" value="1"/>
</dbReference>
<dbReference type="Gene3D" id="3.90.180.10">
    <property type="entry name" value="Medium-chain alcohol dehydrogenases, catalytic domain"/>
    <property type="match status" value="1"/>
</dbReference>
<dbReference type="Gene3D" id="3.40.50.720">
    <property type="entry name" value="NAD(P)-binding Rossmann-like Domain"/>
    <property type="match status" value="1"/>
</dbReference>
<dbReference type="InterPro" id="IPR013149">
    <property type="entry name" value="ADH-like_C"/>
</dbReference>
<dbReference type="InterPro" id="IPR013154">
    <property type="entry name" value="ADH-like_N"/>
</dbReference>
<dbReference type="InterPro" id="IPR014183">
    <property type="entry name" value="ADH_3"/>
</dbReference>
<dbReference type="InterPro" id="IPR002328">
    <property type="entry name" value="ADH_Zn_CS"/>
</dbReference>
<dbReference type="InterPro" id="IPR011032">
    <property type="entry name" value="GroES-like_sf"/>
</dbReference>
<dbReference type="InterPro" id="IPR036291">
    <property type="entry name" value="NAD(P)-bd_dom_sf"/>
</dbReference>
<dbReference type="InterPro" id="IPR020843">
    <property type="entry name" value="PKS_ER"/>
</dbReference>
<dbReference type="NCBIfam" id="TIGR02818">
    <property type="entry name" value="adh_III_F_hyde"/>
    <property type="match status" value="1"/>
</dbReference>
<dbReference type="PANTHER" id="PTHR43880">
    <property type="entry name" value="ALCOHOL DEHYDROGENASE"/>
    <property type="match status" value="1"/>
</dbReference>
<dbReference type="PANTHER" id="PTHR43880:SF12">
    <property type="entry name" value="ALCOHOL DEHYDROGENASE CLASS-3"/>
    <property type="match status" value="1"/>
</dbReference>
<dbReference type="Pfam" id="PF08240">
    <property type="entry name" value="ADH_N"/>
    <property type="match status" value="1"/>
</dbReference>
<dbReference type="Pfam" id="PF00107">
    <property type="entry name" value="ADH_zinc_N"/>
    <property type="match status" value="1"/>
</dbReference>
<dbReference type="SMART" id="SM00829">
    <property type="entry name" value="PKS_ER"/>
    <property type="match status" value="1"/>
</dbReference>
<dbReference type="SUPFAM" id="SSF50129">
    <property type="entry name" value="GroES-like"/>
    <property type="match status" value="2"/>
</dbReference>
<dbReference type="SUPFAM" id="SSF51735">
    <property type="entry name" value="NAD(P)-binding Rossmann-fold domains"/>
    <property type="match status" value="1"/>
</dbReference>
<dbReference type="PROSITE" id="PS00059">
    <property type="entry name" value="ADH_ZINC"/>
    <property type="match status" value="1"/>
</dbReference>
<accession>P44557</accession>
<feature type="chain" id="PRO_0000160776" description="S-(hydroxymethyl)glutathione dehydrogenase">
    <location>
        <begin position="1"/>
        <end position="378"/>
    </location>
</feature>
<feature type="binding site" evidence="1">
    <location>
        <position position="49"/>
    </location>
    <ligand>
        <name>Zn(2+)</name>
        <dbReference type="ChEBI" id="CHEBI:29105"/>
        <label>1</label>
        <note>catalytic</note>
    </ligand>
</feature>
<feature type="binding site" evidence="1">
    <location>
        <position position="71"/>
    </location>
    <ligand>
        <name>Zn(2+)</name>
        <dbReference type="ChEBI" id="CHEBI:29105"/>
        <label>1</label>
        <note>catalytic</note>
    </ligand>
</feature>
<feature type="binding site" evidence="1">
    <location>
        <position position="101"/>
    </location>
    <ligand>
        <name>Zn(2+)</name>
        <dbReference type="ChEBI" id="CHEBI:29105"/>
        <label>2</label>
    </ligand>
</feature>
<feature type="binding site" evidence="1">
    <location>
        <position position="104"/>
    </location>
    <ligand>
        <name>Zn(2+)</name>
        <dbReference type="ChEBI" id="CHEBI:29105"/>
        <label>2</label>
    </ligand>
</feature>
<feature type="binding site" evidence="1">
    <location>
        <position position="107"/>
    </location>
    <ligand>
        <name>Zn(2+)</name>
        <dbReference type="ChEBI" id="CHEBI:29105"/>
        <label>2</label>
    </ligand>
</feature>
<feature type="binding site" evidence="1">
    <location>
        <position position="115"/>
    </location>
    <ligand>
        <name>Zn(2+)</name>
        <dbReference type="ChEBI" id="CHEBI:29105"/>
        <label>2</label>
    </ligand>
</feature>
<feature type="binding site" evidence="1">
    <location>
        <position position="178"/>
    </location>
    <ligand>
        <name>Zn(2+)</name>
        <dbReference type="ChEBI" id="CHEBI:29105"/>
        <label>1</label>
        <note>catalytic</note>
    </ligand>
</feature>